<proteinExistence type="inferred from homology"/>
<organism>
    <name type="scientific">Shewanella halifaxensis (strain HAW-EB4)</name>
    <dbReference type="NCBI Taxonomy" id="458817"/>
    <lineage>
        <taxon>Bacteria</taxon>
        <taxon>Pseudomonadati</taxon>
        <taxon>Pseudomonadota</taxon>
        <taxon>Gammaproteobacteria</taxon>
        <taxon>Alteromonadales</taxon>
        <taxon>Shewanellaceae</taxon>
        <taxon>Shewanella</taxon>
    </lineage>
</organism>
<name>DAPE_SHEHH</name>
<sequence length="381" mass="41377">MSQNTDSPVLSLAKDLISRQSVTPLDEGCQQLMADRLADAGFNIESMVFEDTTNMWARRGTQSPVFCFAGHTDVVPVGDLNRWHTPPFEPVVIDDYLHGRGAADMKGSLAAMLVATERFIKKFPDHQGSIAFLITSDEEGPFINGTTRVIDTLEARNEKITWSLVGEPSSTHKLGDIVKNGRRGSLTGNLTVKGVQGHVAYPHLADNPIHKAAPALDELARMKWDNGNEFFPPTSFQIANINGGTGASNVIPGALEVMFNFRYSTEVTAEILIERVLNILDAHGLEYDIDWVFNGLPFLTGDGPLLEATKAAIKKVTGTNTDPQTSGGTSDGRFIAPTGAQVIELGPVNATIHKVNECVKVSDLELLTDCYEAILENLLCK</sequence>
<reference key="1">
    <citation type="submission" date="2008-01" db="EMBL/GenBank/DDBJ databases">
        <title>Complete sequence of Shewanella halifaxensis HAW-EB4.</title>
        <authorList>
            <consortium name="US DOE Joint Genome Institute"/>
            <person name="Copeland A."/>
            <person name="Lucas S."/>
            <person name="Lapidus A."/>
            <person name="Glavina del Rio T."/>
            <person name="Dalin E."/>
            <person name="Tice H."/>
            <person name="Bruce D."/>
            <person name="Goodwin L."/>
            <person name="Pitluck S."/>
            <person name="Sims D."/>
            <person name="Brettin T."/>
            <person name="Detter J.C."/>
            <person name="Han C."/>
            <person name="Kuske C.R."/>
            <person name="Schmutz J."/>
            <person name="Larimer F."/>
            <person name="Land M."/>
            <person name="Hauser L."/>
            <person name="Kyrpides N."/>
            <person name="Kim E."/>
            <person name="Zhao J.-S."/>
            <person name="Richardson P."/>
        </authorList>
    </citation>
    <scope>NUCLEOTIDE SEQUENCE [LARGE SCALE GENOMIC DNA]</scope>
    <source>
        <strain>HAW-EB4</strain>
    </source>
</reference>
<comment type="function">
    <text evidence="1">Catalyzes the hydrolysis of N-succinyl-L,L-diaminopimelic acid (SDAP), forming succinate and LL-2,6-diaminopimelate (DAP), an intermediate involved in the bacterial biosynthesis of lysine and meso-diaminopimelic acid, an essential component of bacterial cell walls.</text>
</comment>
<comment type="catalytic activity">
    <reaction evidence="1">
        <text>N-succinyl-(2S,6S)-2,6-diaminopimelate + H2O = (2S,6S)-2,6-diaminopimelate + succinate</text>
        <dbReference type="Rhea" id="RHEA:22608"/>
        <dbReference type="ChEBI" id="CHEBI:15377"/>
        <dbReference type="ChEBI" id="CHEBI:30031"/>
        <dbReference type="ChEBI" id="CHEBI:57609"/>
        <dbReference type="ChEBI" id="CHEBI:58087"/>
        <dbReference type="EC" id="3.5.1.18"/>
    </reaction>
</comment>
<comment type="cofactor">
    <cofactor evidence="1">
        <name>Zn(2+)</name>
        <dbReference type="ChEBI" id="CHEBI:29105"/>
    </cofactor>
    <cofactor evidence="1">
        <name>Co(2+)</name>
        <dbReference type="ChEBI" id="CHEBI:48828"/>
    </cofactor>
    <text evidence="1">Binds 2 Zn(2+) or Co(2+) ions per subunit.</text>
</comment>
<comment type="pathway">
    <text evidence="1">Amino-acid biosynthesis; L-lysine biosynthesis via DAP pathway; LL-2,6-diaminopimelate from (S)-tetrahydrodipicolinate (succinylase route): step 3/3.</text>
</comment>
<comment type="subunit">
    <text evidence="1">Homodimer.</text>
</comment>
<comment type="similarity">
    <text evidence="1">Belongs to the peptidase M20A family. DapE subfamily.</text>
</comment>
<dbReference type="EC" id="3.5.1.18" evidence="1"/>
<dbReference type="EMBL" id="CP000931">
    <property type="protein sequence ID" value="ABZ76869.1"/>
    <property type="molecule type" value="Genomic_DNA"/>
</dbReference>
<dbReference type="RefSeq" id="WP_012277398.1">
    <property type="nucleotide sequence ID" value="NC_010334.1"/>
</dbReference>
<dbReference type="SMR" id="B0TVI4"/>
<dbReference type="STRING" id="458817.Shal_2310"/>
<dbReference type="KEGG" id="shl:Shal_2310"/>
<dbReference type="eggNOG" id="COG0624">
    <property type="taxonomic scope" value="Bacteria"/>
</dbReference>
<dbReference type="HOGENOM" id="CLU_021802_4_0_6"/>
<dbReference type="OrthoDB" id="9809784at2"/>
<dbReference type="UniPathway" id="UPA00034">
    <property type="reaction ID" value="UER00021"/>
</dbReference>
<dbReference type="Proteomes" id="UP000001317">
    <property type="component" value="Chromosome"/>
</dbReference>
<dbReference type="GO" id="GO:0008777">
    <property type="term" value="F:acetylornithine deacetylase activity"/>
    <property type="evidence" value="ECO:0007669"/>
    <property type="project" value="TreeGrafter"/>
</dbReference>
<dbReference type="GO" id="GO:0050897">
    <property type="term" value="F:cobalt ion binding"/>
    <property type="evidence" value="ECO:0007669"/>
    <property type="project" value="UniProtKB-UniRule"/>
</dbReference>
<dbReference type="GO" id="GO:0009014">
    <property type="term" value="F:succinyl-diaminopimelate desuccinylase activity"/>
    <property type="evidence" value="ECO:0007669"/>
    <property type="project" value="UniProtKB-UniRule"/>
</dbReference>
<dbReference type="GO" id="GO:0008270">
    <property type="term" value="F:zinc ion binding"/>
    <property type="evidence" value="ECO:0007669"/>
    <property type="project" value="UniProtKB-UniRule"/>
</dbReference>
<dbReference type="GO" id="GO:0019877">
    <property type="term" value="P:diaminopimelate biosynthetic process"/>
    <property type="evidence" value="ECO:0007669"/>
    <property type="project" value="UniProtKB-UniRule"/>
</dbReference>
<dbReference type="GO" id="GO:0006526">
    <property type="term" value="P:L-arginine biosynthetic process"/>
    <property type="evidence" value="ECO:0007669"/>
    <property type="project" value="TreeGrafter"/>
</dbReference>
<dbReference type="GO" id="GO:0009089">
    <property type="term" value="P:lysine biosynthetic process via diaminopimelate"/>
    <property type="evidence" value="ECO:0007669"/>
    <property type="project" value="UniProtKB-UniRule"/>
</dbReference>
<dbReference type="CDD" id="cd03891">
    <property type="entry name" value="M20_DapE_proteobac"/>
    <property type="match status" value="1"/>
</dbReference>
<dbReference type="FunFam" id="3.30.70.360:FF:000011">
    <property type="entry name" value="Succinyl-diaminopimelate desuccinylase"/>
    <property type="match status" value="1"/>
</dbReference>
<dbReference type="FunFam" id="3.40.630.10:FF:000005">
    <property type="entry name" value="Succinyl-diaminopimelate desuccinylase"/>
    <property type="match status" value="1"/>
</dbReference>
<dbReference type="Gene3D" id="3.40.630.10">
    <property type="entry name" value="Zn peptidases"/>
    <property type="match status" value="2"/>
</dbReference>
<dbReference type="HAMAP" id="MF_01690">
    <property type="entry name" value="DapE"/>
    <property type="match status" value="1"/>
</dbReference>
<dbReference type="InterPro" id="IPR001261">
    <property type="entry name" value="ArgE/DapE_CS"/>
</dbReference>
<dbReference type="InterPro" id="IPR036264">
    <property type="entry name" value="Bact_exopeptidase_dim_dom"/>
</dbReference>
<dbReference type="InterPro" id="IPR005941">
    <property type="entry name" value="DapE_proteobac"/>
</dbReference>
<dbReference type="InterPro" id="IPR002933">
    <property type="entry name" value="Peptidase_M20"/>
</dbReference>
<dbReference type="InterPro" id="IPR011650">
    <property type="entry name" value="Peptidase_M20_dimer"/>
</dbReference>
<dbReference type="InterPro" id="IPR050072">
    <property type="entry name" value="Peptidase_M20A"/>
</dbReference>
<dbReference type="NCBIfam" id="TIGR01246">
    <property type="entry name" value="dapE_proteo"/>
    <property type="match status" value="1"/>
</dbReference>
<dbReference type="NCBIfam" id="NF009557">
    <property type="entry name" value="PRK13009.1"/>
    <property type="match status" value="1"/>
</dbReference>
<dbReference type="PANTHER" id="PTHR43808">
    <property type="entry name" value="ACETYLORNITHINE DEACETYLASE"/>
    <property type="match status" value="1"/>
</dbReference>
<dbReference type="PANTHER" id="PTHR43808:SF31">
    <property type="entry name" value="N-ACETYL-L-CITRULLINE DEACETYLASE"/>
    <property type="match status" value="1"/>
</dbReference>
<dbReference type="Pfam" id="PF07687">
    <property type="entry name" value="M20_dimer"/>
    <property type="match status" value="1"/>
</dbReference>
<dbReference type="Pfam" id="PF01546">
    <property type="entry name" value="Peptidase_M20"/>
    <property type="match status" value="1"/>
</dbReference>
<dbReference type="SUPFAM" id="SSF55031">
    <property type="entry name" value="Bacterial exopeptidase dimerisation domain"/>
    <property type="match status" value="1"/>
</dbReference>
<dbReference type="SUPFAM" id="SSF53187">
    <property type="entry name" value="Zn-dependent exopeptidases"/>
    <property type="match status" value="1"/>
</dbReference>
<dbReference type="PROSITE" id="PS00759">
    <property type="entry name" value="ARGE_DAPE_CPG2_2"/>
    <property type="match status" value="1"/>
</dbReference>
<protein>
    <recommendedName>
        <fullName evidence="1">Succinyl-diaminopimelate desuccinylase</fullName>
        <shortName evidence="1">SDAP desuccinylase</shortName>
        <ecNumber evidence="1">3.5.1.18</ecNumber>
    </recommendedName>
    <alternativeName>
        <fullName evidence="1">N-succinyl-LL-2,6-diaminoheptanedioate amidohydrolase</fullName>
    </alternativeName>
</protein>
<keyword id="KW-0028">Amino-acid biosynthesis</keyword>
<keyword id="KW-0170">Cobalt</keyword>
<keyword id="KW-0220">Diaminopimelate biosynthesis</keyword>
<keyword id="KW-0378">Hydrolase</keyword>
<keyword id="KW-0457">Lysine biosynthesis</keyword>
<keyword id="KW-0479">Metal-binding</keyword>
<keyword id="KW-0862">Zinc</keyword>
<gene>
    <name evidence="1" type="primary">dapE</name>
    <name type="ordered locus">Shal_2310</name>
</gene>
<accession>B0TVI4</accession>
<evidence type="ECO:0000255" key="1">
    <source>
        <dbReference type="HAMAP-Rule" id="MF_01690"/>
    </source>
</evidence>
<feature type="chain" id="PRO_0000375732" description="Succinyl-diaminopimelate desuccinylase">
    <location>
        <begin position="1"/>
        <end position="381"/>
    </location>
</feature>
<feature type="active site" evidence="1">
    <location>
        <position position="73"/>
    </location>
</feature>
<feature type="active site" description="Proton acceptor" evidence="1">
    <location>
        <position position="138"/>
    </location>
</feature>
<feature type="binding site" evidence="1">
    <location>
        <position position="71"/>
    </location>
    <ligand>
        <name>Zn(2+)</name>
        <dbReference type="ChEBI" id="CHEBI:29105"/>
        <label>1</label>
    </ligand>
</feature>
<feature type="binding site" evidence="1">
    <location>
        <position position="104"/>
    </location>
    <ligand>
        <name>Zn(2+)</name>
        <dbReference type="ChEBI" id="CHEBI:29105"/>
        <label>1</label>
    </ligand>
</feature>
<feature type="binding site" evidence="1">
    <location>
        <position position="104"/>
    </location>
    <ligand>
        <name>Zn(2+)</name>
        <dbReference type="ChEBI" id="CHEBI:29105"/>
        <label>2</label>
    </ligand>
</feature>
<feature type="binding site" evidence="1">
    <location>
        <position position="139"/>
    </location>
    <ligand>
        <name>Zn(2+)</name>
        <dbReference type="ChEBI" id="CHEBI:29105"/>
        <label>2</label>
    </ligand>
</feature>
<feature type="binding site" evidence="1">
    <location>
        <position position="167"/>
    </location>
    <ligand>
        <name>Zn(2+)</name>
        <dbReference type="ChEBI" id="CHEBI:29105"/>
        <label>1</label>
    </ligand>
</feature>
<feature type="binding site" evidence="1">
    <location>
        <position position="353"/>
    </location>
    <ligand>
        <name>Zn(2+)</name>
        <dbReference type="ChEBI" id="CHEBI:29105"/>
        <label>2</label>
    </ligand>
</feature>